<dbReference type="EC" id="1.1.1.102" evidence="8"/>
<dbReference type="EMBL" id="BX511000">
    <property type="status" value="NOT_ANNOTATED_CDS"/>
    <property type="molecule type" value="Genomic_DNA"/>
</dbReference>
<dbReference type="EMBL" id="CU207344">
    <property type="status" value="NOT_ANNOTATED_CDS"/>
    <property type="molecule type" value="Genomic_DNA"/>
</dbReference>
<dbReference type="SMR" id="F1QWW8"/>
<dbReference type="FunCoup" id="F1QWW8">
    <property type="interactions" value="2011"/>
</dbReference>
<dbReference type="STRING" id="7955.ENSDARP00000009670"/>
<dbReference type="PaxDb" id="7955-ENSDARP00000009670"/>
<dbReference type="eggNOG" id="KOG1210">
    <property type="taxonomic scope" value="Eukaryota"/>
</dbReference>
<dbReference type="HOGENOM" id="CLU_010194_3_2_1"/>
<dbReference type="OrthoDB" id="37659at2759"/>
<dbReference type="PhylomeDB" id="F1QWW8"/>
<dbReference type="TreeFam" id="TF105430"/>
<dbReference type="UniPathway" id="UPA00222"/>
<dbReference type="Proteomes" id="UP000000437">
    <property type="component" value="Chromosome 2"/>
</dbReference>
<dbReference type="Bgee" id="ENSDARG00000012021">
    <property type="expression patterns" value="Expressed in liver and 26 other cell types or tissues"/>
</dbReference>
<dbReference type="ExpressionAtlas" id="F1QWW8">
    <property type="expression patterns" value="baseline"/>
</dbReference>
<dbReference type="GO" id="GO:0005789">
    <property type="term" value="C:endoplasmic reticulum membrane"/>
    <property type="evidence" value="ECO:0000318"/>
    <property type="project" value="GO_Central"/>
</dbReference>
<dbReference type="GO" id="GO:0047560">
    <property type="term" value="F:3-dehydrosphinganine reductase activity"/>
    <property type="evidence" value="ECO:0000250"/>
    <property type="project" value="UniProtKB"/>
</dbReference>
<dbReference type="GO" id="GO:0070402">
    <property type="term" value="F:NADPH binding"/>
    <property type="evidence" value="ECO:0000250"/>
    <property type="project" value="UniProtKB"/>
</dbReference>
<dbReference type="GO" id="GO:0006666">
    <property type="term" value="P:3-keto-sphinganine metabolic process"/>
    <property type="evidence" value="ECO:0000250"/>
    <property type="project" value="UniProtKB"/>
</dbReference>
<dbReference type="GO" id="GO:0090156">
    <property type="term" value="P:intracellular sphingolipid homeostasis"/>
    <property type="evidence" value="ECO:0000315"/>
    <property type="project" value="ZFIN"/>
</dbReference>
<dbReference type="GO" id="GO:0030220">
    <property type="term" value="P:platelet formation"/>
    <property type="evidence" value="ECO:0000315"/>
    <property type="project" value="ZFIN"/>
</dbReference>
<dbReference type="GO" id="GO:0030148">
    <property type="term" value="P:sphingolipid biosynthetic process"/>
    <property type="evidence" value="ECO:0000250"/>
    <property type="project" value="UniProtKB"/>
</dbReference>
<dbReference type="GO" id="GO:0090520">
    <property type="term" value="P:sphingolipid mediated signaling pathway"/>
    <property type="evidence" value="ECO:0000316"/>
    <property type="project" value="ZFIN"/>
</dbReference>
<dbReference type="GO" id="GO:0006686">
    <property type="term" value="P:sphingomyelin biosynthetic process"/>
    <property type="evidence" value="ECO:0000315"/>
    <property type="project" value="ZFIN"/>
</dbReference>
<dbReference type="CDD" id="cd08939">
    <property type="entry name" value="KDSR-like_SDR_c"/>
    <property type="match status" value="1"/>
</dbReference>
<dbReference type="FunFam" id="3.40.50.720:FF:000165">
    <property type="entry name" value="3-ketodihydrosphingosine reductase"/>
    <property type="match status" value="1"/>
</dbReference>
<dbReference type="Gene3D" id="3.40.50.720">
    <property type="entry name" value="NAD(P)-binding Rossmann-like Domain"/>
    <property type="match status" value="1"/>
</dbReference>
<dbReference type="InterPro" id="IPR045022">
    <property type="entry name" value="KDSR-like"/>
</dbReference>
<dbReference type="InterPro" id="IPR036291">
    <property type="entry name" value="NAD(P)-bd_dom_sf"/>
</dbReference>
<dbReference type="InterPro" id="IPR002347">
    <property type="entry name" value="SDR_fam"/>
</dbReference>
<dbReference type="PANTHER" id="PTHR43550">
    <property type="entry name" value="3-KETODIHYDROSPHINGOSINE REDUCTASE"/>
    <property type="match status" value="1"/>
</dbReference>
<dbReference type="PANTHER" id="PTHR43550:SF3">
    <property type="entry name" value="3-KETODIHYDROSPHINGOSINE REDUCTASE"/>
    <property type="match status" value="1"/>
</dbReference>
<dbReference type="Pfam" id="PF00106">
    <property type="entry name" value="adh_short"/>
    <property type="match status" value="1"/>
</dbReference>
<dbReference type="PRINTS" id="PR00081">
    <property type="entry name" value="GDHRDH"/>
</dbReference>
<dbReference type="PRINTS" id="PR00080">
    <property type="entry name" value="SDRFAMILY"/>
</dbReference>
<dbReference type="SUPFAM" id="SSF51735">
    <property type="entry name" value="NAD(P)-binding Rossmann-fold domains"/>
    <property type="match status" value="1"/>
</dbReference>
<name>KDSR_DANRE</name>
<comment type="function">
    <text evidence="5">Catalyzes the reduction of 3'-oxosphinganine (3-ketodihydrosphingosine/KDS) to sphinganine (dihydrosphingosine/DHS), the second step of de novo sphingolipid biosynthesis.</text>
</comment>
<comment type="catalytic activity">
    <reaction evidence="8">
        <text>sphinganine + NADP(+) = 3-oxosphinganine + NADPH + H(+)</text>
        <dbReference type="Rhea" id="RHEA:22640"/>
        <dbReference type="ChEBI" id="CHEBI:15378"/>
        <dbReference type="ChEBI" id="CHEBI:57783"/>
        <dbReference type="ChEBI" id="CHEBI:57817"/>
        <dbReference type="ChEBI" id="CHEBI:58299"/>
        <dbReference type="ChEBI" id="CHEBI:58349"/>
        <dbReference type="EC" id="1.1.1.102"/>
    </reaction>
    <physiologicalReaction direction="right-to-left" evidence="8">
        <dbReference type="Rhea" id="RHEA:22642"/>
    </physiologicalReaction>
</comment>
<comment type="pathway">
    <text evidence="7">Lipid metabolism; sphingolipid metabolism.</text>
</comment>
<comment type="subcellular location">
    <subcellularLocation>
        <location evidence="7">Endoplasmic reticulum</location>
    </subcellularLocation>
</comment>
<comment type="disruption phenotype">
    <text evidence="5">Morpholino-mediated knockdown leads to increased 3-oxosphinganine levels, reduced thrombocyte levels and results in curved tails (PubMed:30467204). Morpholino-mediated knockdown does not alter the level of dihydroceramides, ceramides, sphingomyelins and glycosphingolipids that are downstream of the enzyme (PubMed:30467204).</text>
</comment>
<comment type="similarity">
    <text evidence="7">Belongs to the short-chain dehydrogenases/reductases (SDR) family.</text>
</comment>
<organism>
    <name type="scientific">Danio rerio</name>
    <name type="common">Zebrafish</name>
    <name type="synonym">Brachydanio rerio</name>
    <dbReference type="NCBI Taxonomy" id="7955"/>
    <lineage>
        <taxon>Eukaryota</taxon>
        <taxon>Metazoa</taxon>
        <taxon>Chordata</taxon>
        <taxon>Craniata</taxon>
        <taxon>Vertebrata</taxon>
        <taxon>Euteleostomi</taxon>
        <taxon>Actinopterygii</taxon>
        <taxon>Neopterygii</taxon>
        <taxon>Teleostei</taxon>
        <taxon>Ostariophysi</taxon>
        <taxon>Cypriniformes</taxon>
        <taxon>Danionidae</taxon>
        <taxon>Danioninae</taxon>
        <taxon>Danio</taxon>
    </lineage>
</organism>
<gene>
    <name type="primary">kdsr</name>
    <name type="synonym">fvt1</name>
    <name type="synonym">zgc:55947</name>
</gene>
<keyword id="KW-0256">Endoplasmic reticulum</keyword>
<keyword id="KW-0443">Lipid metabolism</keyword>
<keyword id="KW-0521">NADP</keyword>
<keyword id="KW-0560">Oxidoreductase</keyword>
<keyword id="KW-1185">Reference proteome</keyword>
<keyword id="KW-0732">Signal</keyword>
<keyword id="KW-0746">Sphingolipid metabolism</keyword>
<reference evidence="9" key="1">
    <citation type="journal article" date="2013" name="Nature">
        <title>The zebrafish reference genome sequence and its relationship to the human genome.</title>
        <authorList>
            <person name="Howe K."/>
            <person name="Clark M.D."/>
            <person name="Torroja C.F."/>
            <person name="Torrance J."/>
            <person name="Berthelot C."/>
            <person name="Muffato M."/>
            <person name="Collins J.E."/>
            <person name="Humphray S."/>
            <person name="McLaren K."/>
            <person name="Matthews L."/>
            <person name="McLaren S."/>
            <person name="Sealy I."/>
            <person name="Caccamo M."/>
            <person name="Churcher C."/>
            <person name="Scott C."/>
            <person name="Barrett J.C."/>
            <person name="Koch R."/>
            <person name="Rauch G.J."/>
            <person name="White S."/>
            <person name="Chow W."/>
            <person name="Kilian B."/>
            <person name="Quintais L.T."/>
            <person name="Guerra-Assuncao J.A."/>
            <person name="Zhou Y."/>
            <person name="Gu Y."/>
            <person name="Yen J."/>
            <person name="Vogel J.H."/>
            <person name="Eyre T."/>
            <person name="Redmond S."/>
            <person name="Banerjee R."/>
            <person name="Chi J."/>
            <person name="Fu B."/>
            <person name="Langley E."/>
            <person name="Maguire S.F."/>
            <person name="Laird G.K."/>
            <person name="Lloyd D."/>
            <person name="Kenyon E."/>
            <person name="Donaldson S."/>
            <person name="Sehra H."/>
            <person name="Almeida-King J."/>
            <person name="Loveland J."/>
            <person name="Trevanion S."/>
            <person name="Jones M."/>
            <person name="Quail M."/>
            <person name="Willey D."/>
            <person name="Hunt A."/>
            <person name="Burton J."/>
            <person name="Sims S."/>
            <person name="McLay K."/>
            <person name="Plumb B."/>
            <person name="Davis J."/>
            <person name="Clee C."/>
            <person name="Oliver K."/>
            <person name="Clark R."/>
            <person name="Riddle C."/>
            <person name="Elliot D."/>
            <person name="Threadgold G."/>
            <person name="Harden G."/>
            <person name="Ware D."/>
            <person name="Begum S."/>
            <person name="Mortimore B."/>
            <person name="Kerry G."/>
            <person name="Heath P."/>
            <person name="Phillimore B."/>
            <person name="Tracey A."/>
            <person name="Corby N."/>
            <person name="Dunn M."/>
            <person name="Johnson C."/>
            <person name="Wood J."/>
            <person name="Clark S."/>
            <person name="Pelan S."/>
            <person name="Griffiths G."/>
            <person name="Smith M."/>
            <person name="Glithero R."/>
            <person name="Howden P."/>
            <person name="Barker N."/>
            <person name="Lloyd C."/>
            <person name="Stevens C."/>
            <person name="Harley J."/>
            <person name="Holt K."/>
            <person name="Panagiotidis G."/>
            <person name="Lovell J."/>
            <person name="Beasley H."/>
            <person name="Henderson C."/>
            <person name="Gordon D."/>
            <person name="Auger K."/>
            <person name="Wright D."/>
            <person name="Collins J."/>
            <person name="Raisen C."/>
            <person name="Dyer L."/>
            <person name="Leung K."/>
            <person name="Robertson L."/>
            <person name="Ambridge K."/>
            <person name="Leongamornlert D."/>
            <person name="McGuire S."/>
            <person name="Gilderthorp R."/>
            <person name="Griffiths C."/>
            <person name="Manthravadi D."/>
            <person name="Nichol S."/>
            <person name="Barker G."/>
            <person name="Whitehead S."/>
            <person name="Kay M."/>
            <person name="Brown J."/>
            <person name="Murnane C."/>
            <person name="Gray E."/>
            <person name="Humphries M."/>
            <person name="Sycamore N."/>
            <person name="Barker D."/>
            <person name="Saunders D."/>
            <person name="Wallis J."/>
            <person name="Babbage A."/>
            <person name="Hammond S."/>
            <person name="Mashreghi-Mohammadi M."/>
            <person name="Barr L."/>
            <person name="Martin S."/>
            <person name="Wray P."/>
            <person name="Ellington A."/>
            <person name="Matthews N."/>
            <person name="Ellwood M."/>
            <person name="Woodmansey R."/>
            <person name="Clark G."/>
            <person name="Cooper J."/>
            <person name="Tromans A."/>
            <person name="Grafham D."/>
            <person name="Skuce C."/>
            <person name="Pandian R."/>
            <person name="Andrews R."/>
            <person name="Harrison E."/>
            <person name="Kimberley A."/>
            <person name="Garnett J."/>
            <person name="Fosker N."/>
            <person name="Hall R."/>
            <person name="Garner P."/>
            <person name="Kelly D."/>
            <person name="Bird C."/>
            <person name="Palmer S."/>
            <person name="Gehring I."/>
            <person name="Berger A."/>
            <person name="Dooley C.M."/>
            <person name="Ersan-Urun Z."/>
            <person name="Eser C."/>
            <person name="Geiger H."/>
            <person name="Geisler M."/>
            <person name="Karotki L."/>
            <person name="Kirn A."/>
            <person name="Konantz J."/>
            <person name="Konantz M."/>
            <person name="Oberlander M."/>
            <person name="Rudolph-Geiger S."/>
            <person name="Teucke M."/>
            <person name="Lanz C."/>
            <person name="Raddatz G."/>
            <person name="Osoegawa K."/>
            <person name="Zhu B."/>
            <person name="Rapp A."/>
            <person name="Widaa S."/>
            <person name="Langford C."/>
            <person name="Yang F."/>
            <person name="Schuster S.C."/>
            <person name="Carter N.P."/>
            <person name="Harrow J."/>
            <person name="Ning Z."/>
            <person name="Herrero J."/>
            <person name="Searle S.M."/>
            <person name="Enright A."/>
            <person name="Geisler R."/>
            <person name="Plasterk R.H."/>
            <person name="Lee C."/>
            <person name="Westerfield M."/>
            <person name="de Jong P.J."/>
            <person name="Zon L.I."/>
            <person name="Postlethwait J.H."/>
            <person name="Nusslein-Volhard C."/>
            <person name="Hubbard T.J."/>
            <person name="Roest Crollius H."/>
            <person name="Rogers J."/>
            <person name="Stemple D.L."/>
        </authorList>
    </citation>
    <scope>NUCLEOTIDE SEQUENCE [LARGE SCALE GENOMIC DNA]</scope>
    <source>
        <strain evidence="9">Tuebingen</strain>
    </source>
</reference>
<reference evidence="7" key="2">
    <citation type="journal article" date="2019" name="Haematologica">
        <title>Sphingolipid dysregulation due to lack of functional KDSR impairs proplatelet formation causing thrombocytopenia.</title>
        <authorList>
            <person name="Bariana T.K."/>
            <person name="Labarque V."/>
            <person name="Heremans J."/>
            <person name="Thys C."/>
            <person name="De Reys M."/>
            <person name="Greene D."/>
            <person name="Jenkins B."/>
            <person name="Grassi L."/>
            <person name="Seyres D."/>
            <person name="Burden F."/>
            <person name="Whitehorn D."/>
            <person name="Shamardina O."/>
            <person name="Papadia S."/>
            <person name="Gomez K."/>
            <person name="Bioresource N."/>
            <person name="Van Geet C."/>
            <person name="Koulman A."/>
            <person name="Ouwehand W.H."/>
            <person name="Ghevaert C."/>
            <person name="Frontini M."/>
            <person name="Turro E."/>
            <person name="Freson K."/>
        </authorList>
    </citation>
    <scope>FUNCTION</scope>
    <scope>CATALYTIC ACTIVITY</scope>
    <scope>DISRUPTION PHENOTYPE</scope>
</reference>
<reference evidence="7" key="3">
    <citation type="journal article" date="2019" name="Sci. Rep.">
        <title>3-ketodihydrosphingosine reductase mutation induces steatosis and hepatic injury in zebrafish.</title>
        <authorList>
            <person name="Park K.H."/>
            <person name="Ye Z.W."/>
            <person name="Zhang J."/>
            <person name="Hammad S.M."/>
            <person name="Townsend D.M."/>
            <person name="Rockey D.C."/>
            <person name="Kim S.H."/>
        </authorList>
    </citation>
    <scope>MUTAGENESIS OF ILE-105</scope>
</reference>
<reference evidence="7" key="4">
    <citation type="journal article" date="2020" name="Sci. Rep.">
        <authorList>
            <person name="Park K.H."/>
            <person name="Ye Z.W."/>
            <person name="Zhang J."/>
            <person name="Hammad S.M."/>
            <person name="Townsend D.M."/>
            <person name="Rockey D.C."/>
            <person name="Kim S.H."/>
        </authorList>
    </citation>
    <scope>ERRATUM OF PUBMED:30718751</scope>
</reference>
<accession>F1QWW8</accession>
<accession>A0A8M1PE34</accession>
<accession>F1QNX0</accession>
<feature type="signal peptide" evidence="4">
    <location>
        <begin position="1"/>
        <end position="25"/>
    </location>
</feature>
<feature type="chain" id="PRO_0000460456" description="3-dehydrosphinganine reductase">
    <location>
        <begin position="26"/>
        <end position="332"/>
    </location>
</feature>
<feature type="short sequence motif" description="GXSXG" evidence="3">
    <location>
        <begin position="39"/>
        <end position="43"/>
    </location>
</feature>
<feature type="active site" description="Proton donor" evidence="1">
    <location>
        <position position="172"/>
    </location>
</feature>
<feature type="active site" description="Proton acceptor" evidence="1">
    <location>
        <position position="186"/>
    </location>
</feature>
<feature type="active site" description="Lowers pKa of active site Tyr" evidence="1">
    <location>
        <position position="190"/>
    </location>
</feature>
<feature type="binding site" evidence="2">
    <location>
        <position position="39"/>
    </location>
    <ligand>
        <name>NADPH</name>
        <dbReference type="ChEBI" id="CHEBI:57783"/>
    </ligand>
</feature>
<feature type="binding site" evidence="2">
    <location>
        <position position="41"/>
    </location>
    <ligand>
        <name>NADPH</name>
        <dbReference type="ChEBI" id="CHEBI:57783"/>
    </ligand>
</feature>
<feature type="binding site" evidence="2">
    <location>
        <position position="42"/>
    </location>
    <ligand>
        <name>NADPH</name>
        <dbReference type="ChEBI" id="CHEBI:57783"/>
    </ligand>
</feature>
<feature type="binding site" evidence="2">
    <location>
        <position position="43"/>
    </location>
    <ligand>
        <name>NADPH</name>
        <dbReference type="ChEBI" id="CHEBI:57783"/>
    </ligand>
</feature>
<feature type="binding site" evidence="2">
    <location>
        <position position="64"/>
    </location>
    <ligand>
        <name>NADPH</name>
        <dbReference type="ChEBI" id="CHEBI:57783"/>
    </ligand>
</feature>
<feature type="binding site" evidence="2">
    <location>
        <position position="65"/>
    </location>
    <ligand>
        <name>NADPH</name>
        <dbReference type="ChEBI" id="CHEBI:57783"/>
    </ligand>
</feature>
<feature type="binding site" evidence="2">
    <location>
        <position position="68"/>
    </location>
    <ligand>
        <name>NADPH</name>
        <dbReference type="ChEBI" id="CHEBI:57783"/>
    </ligand>
</feature>
<feature type="binding site" evidence="2">
    <location>
        <position position="93"/>
    </location>
    <ligand>
        <name>NADPH</name>
        <dbReference type="ChEBI" id="CHEBI:57783"/>
    </ligand>
</feature>
<feature type="binding site" evidence="1">
    <location>
        <position position="186"/>
    </location>
    <ligand>
        <name>NADP(+)</name>
        <dbReference type="ChEBI" id="CHEBI:58349"/>
    </ligand>
</feature>
<feature type="binding site" evidence="1">
    <location>
        <position position="190"/>
    </location>
    <ligand>
        <name>NADP(+)</name>
        <dbReference type="ChEBI" id="CHEBI:58349"/>
    </ligand>
</feature>
<feature type="mutagenesis site" description="Mutants develop progressive liver injury and mitochondrial cristae defects and die 8-10 days post fertilization. They accumulate sphingolipids made downstream of the enzyme due to activation of the sphingolipid salvage pathway. The expression of genes associated with oxidative stress, endoplasmic reticulum stress, inflammation, lipid metabolism, and mitochondrial homeostasis are increased. Increases oxygen consumption and decreases glutathione levels. Heterozygous adults exhibit liver injury and activation of the sphingolipid salvage pathway." evidence="6">
    <original>I</original>
    <variation>R</variation>
    <location>
        <position position="105"/>
    </location>
</feature>
<evidence type="ECO:0000250" key="1">
    <source>
        <dbReference type="UniProtKB" id="O93868"/>
    </source>
</evidence>
<evidence type="ECO:0000250" key="2">
    <source>
        <dbReference type="UniProtKB" id="P0CR36"/>
    </source>
</evidence>
<evidence type="ECO:0000250" key="3">
    <source>
        <dbReference type="UniProtKB" id="P40471"/>
    </source>
</evidence>
<evidence type="ECO:0000255" key="4"/>
<evidence type="ECO:0000269" key="5">
    <source>
    </source>
</evidence>
<evidence type="ECO:0000269" key="6">
    <source>
    </source>
</evidence>
<evidence type="ECO:0000305" key="7"/>
<evidence type="ECO:0000305" key="8">
    <source>
    </source>
</evidence>
<evidence type="ECO:0000312" key="9">
    <source>
        <dbReference type="Proteomes" id="UP000000437"/>
    </source>
</evidence>
<proteinExistence type="evidence at protein level"/>
<sequence length="332" mass="36435">MLLVVAAFIVAFVLLLYMISPLISPKPLKLNGAHVVVTGGSSGIGKCIAMECYKHGAFITLVARDEHKLVQAKKEVEKFAINDKQVVLCISVDVAKDYSQVESVIKQAQEKLGPVDMLVNCAGTSLSGKFEEVEVDHFKKMMEVNYLGSVYPTRAVITTMKERRMGRIMFVSSQAGQIGLFGYTAYSPSKFALRGLAEALQMEMKPYNIYVTVAYPPDTDTPGFAEENKTKPLETKLISETSGVSQPEQVAKIVVKDAVQGNFTSSFGPDGYMLSALTCGMSPVTSITEGLQQIVTMGLFRTIALFYLGSFDSIVRRCMIQREQCKAADKRE</sequence>
<protein>
    <recommendedName>
        <fullName evidence="7">3-dehydrosphinganine reductase</fullName>
        <ecNumber evidence="8">1.1.1.102</ecNumber>
    </recommendedName>
</protein>